<name>DBP10_AJECN</name>
<gene>
    <name type="primary">DBP10</name>
    <name type="ORF">HCAG_01083</name>
</gene>
<proteinExistence type="inferred from homology"/>
<dbReference type="EC" id="3.6.4.13"/>
<dbReference type="EMBL" id="CH476655">
    <property type="protein sequence ID" value="EDN03219.1"/>
    <property type="molecule type" value="Genomic_DNA"/>
</dbReference>
<dbReference type="SMR" id="A6QUM7"/>
<dbReference type="STRING" id="339724.A6QUM7"/>
<dbReference type="KEGG" id="aje:HCAG_01083"/>
<dbReference type="VEuPathDB" id="FungiDB:HCAG_01083"/>
<dbReference type="HOGENOM" id="CLU_003041_5_2_1"/>
<dbReference type="OMA" id="EDQFGMM"/>
<dbReference type="OrthoDB" id="4680at299071"/>
<dbReference type="Proteomes" id="UP000009297">
    <property type="component" value="Unassembled WGS sequence"/>
</dbReference>
<dbReference type="GO" id="GO:0005829">
    <property type="term" value="C:cytosol"/>
    <property type="evidence" value="ECO:0007669"/>
    <property type="project" value="TreeGrafter"/>
</dbReference>
<dbReference type="GO" id="GO:0005730">
    <property type="term" value="C:nucleolus"/>
    <property type="evidence" value="ECO:0007669"/>
    <property type="project" value="UniProtKB-SubCell"/>
</dbReference>
<dbReference type="GO" id="GO:0005524">
    <property type="term" value="F:ATP binding"/>
    <property type="evidence" value="ECO:0007669"/>
    <property type="project" value="UniProtKB-KW"/>
</dbReference>
<dbReference type="GO" id="GO:0016887">
    <property type="term" value="F:ATP hydrolysis activity"/>
    <property type="evidence" value="ECO:0007669"/>
    <property type="project" value="RHEA"/>
</dbReference>
<dbReference type="GO" id="GO:0003723">
    <property type="term" value="F:RNA binding"/>
    <property type="evidence" value="ECO:0007669"/>
    <property type="project" value="UniProtKB-KW"/>
</dbReference>
<dbReference type="GO" id="GO:0003724">
    <property type="term" value="F:RNA helicase activity"/>
    <property type="evidence" value="ECO:0007669"/>
    <property type="project" value="UniProtKB-EC"/>
</dbReference>
<dbReference type="GO" id="GO:0006364">
    <property type="term" value="P:rRNA processing"/>
    <property type="evidence" value="ECO:0007669"/>
    <property type="project" value="UniProtKB-KW"/>
</dbReference>
<dbReference type="CDD" id="cd17959">
    <property type="entry name" value="DEADc_DDX54"/>
    <property type="match status" value="1"/>
</dbReference>
<dbReference type="CDD" id="cd18787">
    <property type="entry name" value="SF2_C_DEAD"/>
    <property type="match status" value="1"/>
</dbReference>
<dbReference type="FunFam" id="3.40.50.300:FF:000865">
    <property type="entry name" value="ATP-dependent RNA helicase DDX54"/>
    <property type="match status" value="1"/>
</dbReference>
<dbReference type="Gene3D" id="3.40.50.300">
    <property type="entry name" value="P-loop containing nucleotide triphosphate hydrolases"/>
    <property type="match status" value="2"/>
</dbReference>
<dbReference type="InterPro" id="IPR012541">
    <property type="entry name" value="DBP10_C"/>
</dbReference>
<dbReference type="InterPro" id="IPR033517">
    <property type="entry name" value="DDX54/DBP10_DEAD-box_helicase"/>
</dbReference>
<dbReference type="InterPro" id="IPR011545">
    <property type="entry name" value="DEAD/DEAH_box_helicase_dom"/>
</dbReference>
<dbReference type="InterPro" id="IPR050079">
    <property type="entry name" value="DEAD_box_RNA_helicase"/>
</dbReference>
<dbReference type="InterPro" id="IPR014001">
    <property type="entry name" value="Helicase_ATP-bd"/>
</dbReference>
<dbReference type="InterPro" id="IPR001650">
    <property type="entry name" value="Helicase_C-like"/>
</dbReference>
<dbReference type="InterPro" id="IPR027417">
    <property type="entry name" value="P-loop_NTPase"/>
</dbReference>
<dbReference type="InterPro" id="IPR000629">
    <property type="entry name" value="RNA-helicase_DEAD-box_CS"/>
</dbReference>
<dbReference type="InterPro" id="IPR014014">
    <property type="entry name" value="RNA_helicase_DEAD_Q_motif"/>
</dbReference>
<dbReference type="PANTHER" id="PTHR47959">
    <property type="entry name" value="ATP-DEPENDENT RNA HELICASE RHLE-RELATED"/>
    <property type="match status" value="1"/>
</dbReference>
<dbReference type="PANTHER" id="PTHR47959:SF8">
    <property type="entry name" value="RNA HELICASE"/>
    <property type="match status" value="1"/>
</dbReference>
<dbReference type="Pfam" id="PF08147">
    <property type="entry name" value="DBP10CT"/>
    <property type="match status" value="1"/>
</dbReference>
<dbReference type="Pfam" id="PF00270">
    <property type="entry name" value="DEAD"/>
    <property type="match status" value="1"/>
</dbReference>
<dbReference type="Pfam" id="PF00271">
    <property type="entry name" value="Helicase_C"/>
    <property type="match status" value="1"/>
</dbReference>
<dbReference type="SMART" id="SM01123">
    <property type="entry name" value="DBP10CT"/>
    <property type="match status" value="1"/>
</dbReference>
<dbReference type="SMART" id="SM00487">
    <property type="entry name" value="DEXDc"/>
    <property type="match status" value="1"/>
</dbReference>
<dbReference type="SMART" id="SM00490">
    <property type="entry name" value="HELICc"/>
    <property type="match status" value="1"/>
</dbReference>
<dbReference type="SUPFAM" id="SSF52540">
    <property type="entry name" value="P-loop containing nucleoside triphosphate hydrolases"/>
    <property type="match status" value="2"/>
</dbReference>
<dbReference type="PROSITE" id="PS00039">
    <property type="entry name" value="DEAD_ATP_HELICASE"/>
    <property type="match status" value="1"/>
</dbReference>
<dbReference type="PROSITE" id="PS51192">
    <property type="entry name" value="HELICASE_ATP_BIND_1"/>
    <property type="match status" value="1"/>
</dbReference>
<dbReference type="PROSITE" id="PS51194">
    <property type="entry name" value="HELICASE_CTER"/>
    <property type="match status" value="1"/>
</dbReference>
<dbReference type="PROSITE" id="PS51195">
    <property type="entry name" value="Q_MOTIF"/>
    <property type="match status" value="1"/>
</dbReference>
<comment type="function">
    <text evidence="1">ATP-binding RNA helicase involved in the biogenesis of 60S ribosomal subunits and is required for the normal formation of 25S and 5.8S rRNAs.</text>
</comment>
<comment type="catalytic activity">
    <reaction>
        <text>ATP + H2O = ADP + phosphate + H(+)</text>
        <dbReference type="Rhea" id="RHEA:13065"/>
        <dbReference type="ChEBI" id="CHEBI:15377"/>
        <dbReference type="ChEBI" id="CHEBI:15378"/>
        <dbReference type="ChEBI" id="CHEBI:30616"/>
        <dbReference type="ChEBI" id="CHEBI:43474"/>
        <dbReference type="ChEBI" id="CHEBI:456216"/>
        <dbReference type="EC" id="3.6.4.13"/>
    </reaction>
</comment>
<comment type="subcellular location">
    <subcellularLocation>
        <location evidence="1">Nucleus</location>
        <location evidence="1">Nucleolus</location>
    </subcellularLocation>
</comment>
<comment type="domain">
    <text>The Q motif is unique to and characteristic of the DEAD box family of RNA helicases and controls ATP binding and hydrolysis.</text>
</comment>
<comment type="similarity">
    <text evidence="5">Belongs to the DEAD box helicase family. DDX54/DBP10 subfamily.</text>
</comment>
<keyword id="KW-0067">ATP-binding</keyword>
<keyword id="KW-0347">Helicase</keyword>
<keyword id="KW-0378">Hydrolase</keyword>
<keyword id="KW-0547">Nucleotide-binding</keyword>
<keyword id="KW-0539">Nucleus</keyword>
<keyword id="KW-1185">Reference proteome</keyword>
<keyword id="KW-0690">Ribosome biogenesis</keyword>
<keyword id="KW-0694">RNA-binding</keyword>
<keyword id="KW-0698">rRNA processing</keyword>
<evidence type="ECO:0000250" key="1"/>
<evidence type="ECO:0000255" key="2">
    <source>
        <dbReference type="PROSITE-ProRule" id="PRU00541"/>
    </source>
</evidence>
<evidence type="ECO:0000255" key="3">
    <source>
        <dbReference type="PROSITE-ProRule" id="PRU00542"/>
    </source>
</evidence>
<evidence type="ECO:0000256" key="4">
    <source>
        <dbReference type="SAM" id="MobiDB-lite"/>
    </source>
</evidence>
<evidence type="ECO:0000305" key="5"/>
<sequence>MPHRDVSPAASENEFDISNLLFKGQDDLSDLERPSKKRKPQETLILDVMGDGDDGADGDEEFIAAQQTAANRKASNLRGRTVKKGGGFQSLGLNAALLKAITRKGFSVPTPIQRKTIPLVLDDQDVVGMARTGSGKTAAFVIPMIEKLKSHSAKFGSRALILSPSRELALQTLKVVKELGRGTDLKSVLLVGGDSLEEQFEYMASNPDIIIATPGRFLHLKVEMSLDLSSIRYVVFDEADRLFEMGFATQLTEILHGLPSSRQTLLFSATLPKSLVEFARAGLQEPILIRLDAESKISPDLQNAFFTVKSSEKEGALLHVLHEVIKIPTGETEALKRAKEEVKHSKKRKRSEVTSNSHKESPTEHSTIIFTATKHHVDYLTSILRTSGFAVSYAYGSLDQTARKIEVQNFRDGITHILVVTDVAARGIDIPILSNVINYDFPSQPKIFVHRVGRTARAGKTGWSYSLIRESDTPYLLDLQLFLGRPLILGRGSGQQLNYAENVVVGSLPRDKVARYTEWMTKLLDEDVDIELQREVAIKGEKLYMRTRNSASGESAKRAKAVVESAEWMMVHPLFNDESSRLEEQREKMLARVGGYKPQETIFEISGRRGANHHPPDDSDDANELRDFDGENDNAIAADNMSLASDSELEVTFSYPQSGKSNSKKDTNHPNLRESFHNPEYFMSYTPASNSLAEDRAYGVHSGSNTNFVESSRIATMDLAGDESTSRGFGEPRSIMRWDKRQKKYVSRRNDEDGSKGGKSDLLVRGESGVKIAASFRSGRFDAWKKGKRIGRMPRVGEAEAPGLGSGMPGGKKYRHRKEQAPKTPDKFRGDYEKKKKKLEAAKQRETEKAFDPSSGAKKAAVTSRGKSELKTVEDIRKARKVKELRKQKNARPSKKGKGR</sequence>
<organism>
    <name type="scientific">Ajellomyces capsulatus (strain NAm1 / WU24)</name>
    <name type="common">Darling's disease fungus</name>
    <name type="synonym">Histoplasma capsulatum</name>
    <dbReference type="NCBI Taxonomy" id="2059318"/>
    <lineage>
        <taxon>Eukaryota</taxon>
        <taxon>Fungi</taxon>
        <taxon>Dikarya</taxon>
        <taxon>Ascomycota</taxon>
        <taxon>Pezizomycotina</taxon>
        <taxon>Eurotiomycetes</taxon>
        <taxon>Eurotiomycetidae</taxon>
        <taxon>Onygenales</taxon>
        <taxon>Ajellomycetaceae</taxon>
        <taxon>Histoplasma</taxon>
    </lineage>
</organism>
<accession>A6QUM7</accession>
<feature type="chain" id="PRO_0000310243" description="ATP-dependent RNA helicase DBP10">
    <location>
        <begin position="1"/>
        <end position="900"/>
    </location>
</feature>
<feature type="domain" description="Helicase ATP-binding" evidence="2">
    <location>
        <begin position="117"/>
        <end position="289"/>
    </location>
</feature>
<feature type="domain" description="Helicase C-terminal" evidence="3">
    <location>
        <begin position="330"/>
        <end position="505"/>
    </location>
</feature>
<feature type="region of interest" description="Disordered" evidence="4">
    <location>
        <begin position="337"/>
        <end position="366"/>
    </location>
</feature>
<feature type="region of interest" description="Disordered" evidence="4">
    <location>
        <begin position="606"/>
        <end position="628"/>
    </location>
</feature>
<feature type="region of interest" description="Disordered" evidence="4">
    <location>
        <begin position="740"/>
        <end position="762"/>
    </location>
</feature>
<feature type="region of interest" description="Disordered" evidence="4">
    <location>
        <begin position="793"/>
        <end position="900"/>
    </location>
</feature>
<feature type="short sequence motif" description="Q motif">
    <location>
        <begin position="86"/>
        <end position="114"/>
    </location>
</feature>
<feature type="short sequence motif" description="DEAD box">
    <location>
        <begin position="237"/>
        <end position="240"/>
    </location>
</feature>
<feature type="compositionally biased region" description="Basic and acidic residues" evidence="4">
    <location>
        <begin position="748"/>
        <end position="762"/>
    </location>
</feature>
<feature type="compositionally biased region" description="Basic and acidic residues" evidence="4">
    <location>
        <begin position="819"/>
        <end position="851"/>
    </location>
</feature>
<feature type="compositionally biased region" description="Basic and acidic residues" evidence="4">
    <location>
        <begin position="866"/>
        <end position="877"/>
    </location>
</feature>
<feature type="compositionally biased region" description="Basic residues" evidence="4">
    <location>
        <begin position="878"/>
        <end position="900"/>
    </location>
</feature>
<feature type="binding site" evidence="2">
    <location>
        <begin position="130"/>
        <end position="137"/>
    </location>
    <ligand>
        <name>ATP</name>
        <dbReference type="ChEBI" id="CHEBI:30616"/>
    </ligand>
</feature>
<protein>
    <recommendedName>
        <fullName>ATP-dependent RNA helicase DBP10</fullName>
        <ecNumber>3.6.4.13</ecNumber>
    </recommendedName>
</protein>
<reference key="1">
    <citation type="journal article" date="2009" name="Genome Res.">
        <title>Comparative genomic analyses of the human fungal pathogens Coccidioides and their relatives.</title>
        <authorList>
            <person name="Sharpton T.J."/>
            <person name="Stajich J.E."/>
            <person name="Rounsley S.D."/>
            <person name="Gardner M.J."/>
            <person name="Wortman J.R."/>
            <person name="Jordar V.S."/>
            <person name="Maiti R."/>
            <person name="Kodira C.D."/>
            <person name="Neafsey D.E."/>
            <person name="Zeng Q."/>
            <person name="Hung C.-Y."/>
            <person name="McMahan C."/>
            <person name="Muszewska A."/>
            <person name="Grynberg M."/>
            <person name="Mandel M.A."/>
            <person name="Kellner E.M."/>
            <person name="Barker B.M."/>
            <person name="Galgiani J.N."/>
            <person name="Orbach M.J."/>
            <person name="Kirkland T.N."/>
            <person name="Cole G.T."/>
            <person name="Henn M.R."/>
            <person name="Birren B.W."/>
            <person name="Taylor J.W."/>
        </authorList>
    </citation>
    <scope>NUCLEOTIDE SEQUENCE [LARGE SCALE GENOMIC DNA]</scope>
    <source>
        <strain>NAm1 / WU24</strain>
    </source>
</reference>